<comment type="function">
    <text evidence="1">The alpha subunit is responsible for the aldol cleavage of indoleglycerol phosphate to indole and glyceraldehyde 3-phosphate.</text>
</comment>
<comment type="catalytic activity">
    <reaction evidence="1">
        <text>(1S,2R)-1-C-(indol-3-yl)glycerol 3-phosphate + L-serine = D-glyceraldehyde 3-phosphate + L-tryptophan + H2O</text>
        <dbReference type="Rhea" id="RHEA:10532"/>
        <dbReference type="ChEBI" id="CHEBI:15377"/>
        <dbReference type="ChEBI" id="CHEBI:33384"/>
        <dbReference type="ChEBI" id="CHEBI:57912"/>
        <dbReference type="ChEBI" id="CHEBI:58866"/>
        <dbReference type="ChEBI" id="CHEBI:59776"/>
        <dbReference type="EC" id="4.2.1.20"/>
    </reaction>
</comment>
<comment type="pathway">
    <text evidence="1">Amino-acid biosynthesis; L-tryptophan biosynthesis; L-tryptophan from chorismate: step 5/5.</text>
</comment>
<comment type="subunit">
    <text evidence="1">Tetramer of two alpha and two beta chains.</text>
</comment>
<comment type="similarity">
    <text evidence="1">Belongs to the TrpA family.</text>
</comment>
<accession>Q8ESU5</accession>
<gene>
    <name evidence="1" type="primary">trpA</name>
    <name type="ordered locus">OB0521</name>
</gene>
<keyword id="KW-0028">Amino-acid biosynthesis</keyword>
<keyword id="KW-0057">Aromatic amino acid biosynthesis</keyword>
<keyword id="KW-0456">Lyase</keyword>
<keyword id="KW-1185">Reference proteome</keyword>
<keyword id="KW-0822">Tryptophan biosynthesis</keyword>
<feature type="chain" id="PRO_0000098818" description="Tryptophan synthase alpha chain">
    <location>
        <begin position="1"/>
        <end position="262"/>
    </location>
</feature>
<feature type="active site" description="Proton acceptor" evidence="1">
    <location>
        <position position="51"/>
    </location>
</feature>
<feature type="active site" description="Proton acceptor" evidence="1">
    <location>
        <position position="62"/>
    </location>
</feature>
<protein>
    <recommendedName>
        <fullName evidence="1">Tryptophan synthase alpha chain</fullName>
        <ecNumber evidence="1">4.2.1.20</ecNumber>
    </recommendedName>
</protein>
<evidence type="ECO:0000255" key="1">
    <source>
        <dbReference type="HAMAP-Rule" id="MF_00131"/>
    </source>
</evidence>
<proteinExistence type="inferred from homology"/>
<reference key="1">
    <citation type="journal article" date="2002" name="Nucleic Acids Res.">
        <title>Genome sequence of Oceanobacillus iheyensis isolated from the Iheya Ridge and its unexpected adaptive capabilities to extreme environments.</title>
        <authorList>
            <person name="Takami H."/>
            <person name="Takaki Y."/>
            <person name="Uchiyama I."/>
        </authorList>
    </citation>
    <scope>NUCLEOTIDE SEQUENCE [LARGE SCALE GENOMIC DNA]</scope>
    <source>
        <strain>DSM 14371 / CIP 107618 / JCM 11309 / KCTC 3954 / HTE831</strain>
    </source>
</reference>
<sequence length="262" mass="28458">MGKSKLDAVLKEKTQAKKPIFVPYIMAGDGGIDNLNKRIQFLEEAGASAVELGIPFSDPVADGPVIQDAGQRALANKTTIGSVLEALESEKSQRNIPVVLMTYINPVWKYGFEQFARDCSQAGVDGIIIPDIPMEEEDDVASSLTQHDIAFIRLAAMTSTEDRLERIAKRSEGFLYAVSVTGTTGERAQHENDAFHFLEKLKQISHVPVLAGFGISTAERARELSAACDGVVVGSKIVQLFEQGDEDGIHSLIRESIGEKVI</sequence>
<organism>
    <name type="scientific">Oceanobacillus iheyensis (strain DSM 14371 / CIP 107618 / JCM 11309 / KCTC 3954 / HTE831)</name>
    <dbReference type="NCBI Taxonomy" id="221109"/>
    <lineage>
        <taxon>Bacteria</taxon>
        <taxon>Bacillati</taxon>
        <taxon>Bacillota</taxon>
        <taxon>Bacilli</taxon>
        <taxon>Bacillales</taxon>
        <taxon>Bacillaceae</taxon>
        <taxon>Oceanobacillus</taxon>
    </lineage>
</organism>
<name>TRPA_OCEIH</name>
<dbReference type="EC" id="4.2.1.20" evidence="1"/>
<dbReference type="EMBL" id="BA000028">
    <property type="protein sequence ID" value="BAC12477.1"/>
    <property type="molecule type" value="Genomic_DNA"/>
</dbReference>
<dbReference type="RefSeq" id="WP_011064924.1">
    <property type="nucleotide sequence ID" value="NC_004193.1"/>
</dbReference>
<dbReference type="SMR" id="Q8ESU5"/>
<dbReference type="STRING" id="221109.gene:10732725"/>
<dbReference type="KEGG" id="oih:OB0521"/>
<dbReference type="eggNOG" id="COG0159">
    <property type="taxonomic scope" value="Bacteria"/>
</dbReference>
<dbReference type="HOGENOM" id="CLU_016734_0_0_9"/>
<dbReference type="OrthoDB" id="9804578at2"/>
<dbReference type="PhylomeDB" id="Q8ESU5"/>
<dbReference type="UniPathway" id="UPA00035">
    <property type="reaction ID" value="UER00044"/>
</dbReference>
<dbReference type="Proteomes" id="UP000000822">
    <property type="component" value="Chromosome"/>
</dbReference>
<dbReference type="GO" id="GO:0005829">
    <property type="term" value="C:cytosol"/>
    <property type="evidence" value="ECO:0007669"/>
    <property type="project" value="TreeGrafter"/>
</dbReference>
<dbReference type="GO" id="GO:0004834">
    <property type="term" value="F:tryptophan synthase activity"/>
    <property type="evidence" value="ECO:0007669"/>
    <property type="project" value="UniProtKB-UniRule"/>
</dbReference>
<dbReference type="CDD" id="cd04724">
    <property type="entry name" value="Tryptophan_synthase_alpha"/>
    <property type="match status" value="1"/>
</dbReference>
<dbReference type="FunFam" id="3.20.20.70:FF:000037">
    <property type="entry name" value="Tryptophan synthase alpha chain"/>
    <property type="match status" value="1"/>
</dbReference>
<dbReference type="Gene3D" id="3.20.20.70">
    <property type="entry name" value="Aldolase class I"/>
    <property type="match status" value="1"/>
</dbReference>
<dbReference type="HAMAP" id="MF_00131">
    <property type="entry name" value="Trp_synth_alpha"/>
    <property type="match status" value="1"/>
</dbReference>
<dbReference type="InterPro" id="IPR013785">
    <property type="entry name" value="Aldolase_TIM"/>
</dbReference>
<dbReference type="InterPro" id="IPR011060">
    <property type="entry name" value="RibuloseP-bd_barrel"/>
</dbReference>
<dbReference type="InterPro" id="IPR018204">
    <property type="entry name" value="Trp_synthase_alpha_AS"/>
</dbReference>
<dbReference type="InterPro" id="IPR002028">
    <property type="entry name" value="Trp_synthase_suA"/>
</dbReference>
<dbReference type="NCBIfam" id="TIGR00262">
    <property type="entry name" value="trpA"/>
    <property type="match status" value="1"/>
</dbReference>
<dbReference type="PANTHER" id="PTHR43406:SF1">
    <property type="entry name" value="TRYPTOPHAN SYNTHASE ALPHA CHAIN, CHLOROPLASTIC"/>
    <property type="match status" value="1"/>
</dbReference>
<dbReference type="PANTHER" id="PTHR43406">
    <property type="entry name" value="TRYPTOPHAN SYNTHASE, ALPHA CHAIN"/>
    <property type="match status" value="1"/>
</dbReference>
<dbReference type="Pfam" id="PF00290">
    <property type="entry name" value="Trp_syntA"/>
    <property type="match status" value="1"/>
</dbReference>
<dbReference type="SUPFAM" id="SSF51366">
    <property type="entry name" value="Ribulose-phoshate binding barrel"/>
    <property type="match status" value="1"/>
</dbReference>
<dbReference type="PROSITE" id="PS00167">
    <property type="entry name" value="TRP_SYNTHASE_ALPHA"/>
    <property type="match status" value="1"/>
</dbReference>